<accession>Q5ZKM0</accession>
<comment type="function">
    <text evidence="1">Component of the BLOC-1 complex, a complex that is required for normal biogenesis of lysosome-related organelles (LRO), such as platelet dense granules and melanosomes. Plays a role in intracellular vesicle trafficking. Plays a role in synaptic vesicle trafficking and in neurotransmitter release. May be required for normal dopamine homeostasis in the cerebral cortex, hippocampus, and hypothalamus. Plays a role in the regulation of cell surface exposure of DRD2. Contributes to the regulation of dopamine signaling. May play a role in actin cytoskeleton reorganization and neurite outgrowth (By similarity).</text>
</comment>
<comment type="subunit">
    <text evidence="1">Component of the biogenesis of lysosome-related organelles complex 1 (BLOC-1).</text>
</comment>
<comment type="subcellular location">
    <subcellularLocation>
        <location evidence="1">Cytoplasm</location>
    </subcellularLocation>
    <subcellularLocation>
        <location evidence="1">Cytoplasmic vesicle membrane</location>
        <topology evidence="1">Peripheral membrane protein</topology>
        <orientation evidence="1">Cytoplasmic side</orientation>
    </subcellularLocation>
    <subcellularLocation>
        <location evidence="1">Cytoplasmic vesicle</location>
        <location evidence="1">Secretory vesicle</location>
        <location evidence="1">Synaptic vesicle membrane</location>
        <topology evidence="1">Peripheral membrane protein</topology>
        <orientation evidence="1">Cytoplasmic side</orientation>
    </subcellularLocation>
    <subcellularLocation>
        <location evidence="1">Endosome membrane</location>
        <topology evidence="1">Peripheral membrane protein</topology>
        <orientation evidence="1">Cytoplasmic side</orientation>
    </subcellularLocation>
    <subcellularLocation>
        <location evidence="1">Melanosome membrane</location>
        <topology evidence="1">Peripheral membrane protein</topology>
        <orientation evidence="1">Cytoplasmic side</orientation>
    </subcellularLocation>
    <subcellularLocation>
        <location evidence="1">Nucleus</location>
    </subcellularLocation>
    <subcellularLocation>
        <location evidence="1">Postsynaptic density</location>
    </subcellularLocation>
    <subcellularLocation>
        <location evidence="1">Endoplasmic reticulum</location>
    </subcellularLocation>
    <text evidence="1">Detected at axon terminals and in dendrites. Detected at synapses, at postsynaptic density, at presynaptic vesicle membranes and microtubules. Detected at tubulovesicular elements in the vicinity of the Golgi apparatus and of melanosomes. Detected in neuron cell bodies, axons and dendrites (By similarity).</text>
</comment>
<comment type="similarity">
    <text evidence="4">Belongs to the dysbindin family.</text>
</comment>
<name>DTBP1_CHICK</name>
<organism>
    <name type="scientific">Gallus gallus</name>
    <name type="common">Chicken</name>
    <dbReference type="NCBI Taxonomy" id="9031"/>
    <lineage>
        <taxon>Eukaryota</taxon>
        <taxon>Metazoa</taxon>
        <taxon>Chordata</taxon>
        <taxon>Craniata</taxon>
        <taxon>Vertebrata</taxon>
        <taxon>Euteleostomi</taxon>
        <taxon>Archelosauria</taxon>
        <taxon>Archosauria</taxon>
        <taxon>Dinosauria</taxon>
        <taxon>Saurischia</taxon>
        <taxon>Theropoda</taxon>
        <taxon>Coelurosauria</taxon>
        <taxon>Aves</taxon>
        <taxon>Neognathae</taxon>
        <taxon>Galloanserae</taxon>
        <taxon>Galliformes</taxon>
        <taxon>Phasianidae</taxon>
        <taxon>Phasianinae</taxon>
        <taxon>Gallus</taxon>
    </lineage>
</organism>
<dbReference type="EMBL" id="AJ720064">
    <property type="protein sequence ID" value="CAG31723.1"/>
    <property type="molecule type" value="mRNA"/>
</dbReference>
<dbReference type="RefSeq" id="NP_001006372.1">
    <property type="nucleotide sequence ID" value="NM_001006372.2"/>
</dbReference>
<dbReference type="SMR" id="Q5ZKM0"/>
<dbReference type="FunCoup" id="Q5ZKM0">
    <property type="interactions" value="37"/>
</dbReference>
<dbReference type="STRING" id="9031.ENSGALP00000068722"/>
<dbReference type="PaxDb" id="9031-ENSGALP00000030426"/>
<dbReference type="GeneID" id="420840"/>
<dbReference type="KEGG" id="gga:420840"/>
<dbReference type="CTD" id="84062"/>
<dbReference type="VEuPathDB" id="HostDB:geneid_420840"/>
<dbReference type="eggNOG" id="ENOG502QRS9">
    <property type="taxonomic scope" value="Eukaryota"/>
</dbReference>
<dbReference type="HOGENOM" id="CLU_071074_0_0_1"/>
<dbReference type="InParanoid" id="Q5ZKM0"/>
<dbReference type="OrthoDB" id="2445127at2759"/>
<dbReference type="PhylomeDB" id="Q5ZKM0"/>
<dbReference type="PRO" id="PR:Q5ZKM0"/>
<dbReference type="Proteomes" id="UP000000539">
    <property type="component" value="Chromosome 2"/>
</dbReference>
<dbReference type="Bgee" id="ENSGALG00000012703">
    <property type="expression patterns" value="Expressed in brain and 13 other cell types or tissues"/>
</dbReference>
<dbReference type="GO" id="GO:0030424">
    <property type="term" value="C:axon"/>
    <property type="evidence" value="ECO:0000250"/>
    <property type="project" value="UniProtKB"/>
</dbReference>
<dbReference type="GO" id="GO:1904115">
    <property type="term" value="C:axon cytoplasm"/>
    <property type="evidence" value="ECO:0007669"/>
    <property type="project" value="GOC"/>
</dbReference>
<dbReference type="GO" id="GO:0031083">
    <property type="term" value="C:BLOC-1 complex"/>
    <property type="evidence" value="ECO:0000250"/>
    <property type="project" value="UniProtKB"/>
</dbReference>
<dbReference type="GO" id="GO:0043197">
    <property type="term" value="C:dendritic spine"/>
    <property type="evidence" value="ECO:0000250"/>
    <property type="project" value="UniProtKB"/>
</dbReference>
<dbReference type="GO" id="GO:0005789">
    <property type="term" value="C:endoplasmic reticulum membrane"/>
    <property type="evidence" value="ECO:0000250"/>
    <property type="project" value="UniProtKB"/>
</dbReference>
<dbReference type="GO" id="GO:0010008">
    <property type="term" value="C:endosome membrane"/>
    <property type="evidence" value="ECO:0007669"/>
    <property type="project" value="UniProtKB-SubCell"/>
</dbReference>
<dbReference type="GO" id="GO:0030426">
    <property type="term" value="C:growth cone"/>
    <property type="evidence" value="ECO:0000250"/>
    <property type="project" value="UniProtKB"/>
</dbReference>
<dbReference type="GO" id="GO:0033162">
    <property type="term" value="C:melanosome membrane"/>
    <property type="evidence" value="ECO:0007669"/>
    <property type="project" value="UniProtKB-SubCell"/>
</dbReference>
<dbReference type="GO" id="GO:0043005">
    <property type="term" value="C:neuron projection"/>
    <property type="evidence" value="ECO:0000250"/>
    <property type="project" value="UniProtKB"/>
</dbReference>
<dbReference type="GO" id="GO:0005634">
    <property type="term" value="C:nucleus"/>
    <property type="evidence" value="ECO:0007669"/>
    <property type="project" value="UniProtKB-SubCell"/>
</dbReference>
<dbReference type="GO" id="GO:0005886">
    <property type="term" value="C:plasma membrane"/>
    <property type="evidence" value="ECO:0000318"/>
    <property type="project" value="GO_Central"/>
</dbReference>
<dbReference type="GO" id="GO:0014069">
    <property type="term" value="C:postsynaptic density"/>
    <property type="evidence" value="ECO:0000250"/>
    <property type="project" value="UniProtKB"/>
</dbReference>
<dbReference type="GO" id="GO:0030672">
    <property type="term" value="C:synaptic vesicle membrane"/>
    <property type="evidence" value="ECO:0000250"/>
    <property type="project" value="UniProtKB"/>
</dbReference>
<dbReference type="GO" id="GO:0030036">
    <property type="term" value="P:actin cytoskeleton organization"/>
    <property type="evidence" value="ECO:0000250"/>
    <property type="project" value="UniProtKB"/>
</dbReference>
<dbReference type="GO" id="GO:0008089">
    <property type="term" value="P:anterograde axonal transport"/>
    <property type="evidence" value="ECO:0000250"/>
    <property type="project" value="UniProtKB"/>
</dbReference>
<dbReference type="GO" id="GO:0048490">
    <property type="term" value="P:anterograde synaptic vesicle transport"/>
    <property type="evidence" value="ECO:0000250"/>
    <property type="project" value="UniProtKB"/>
</dbReference>
<dbReference type="GO" id="GO:0031175">
    <property type="term" value="P:neuron projection development"/>
    <property type="evidence" value="ECO:0000250"/>
    <property type="project" value="UniProtKB"/>
</dbReference>
<dbReference type="GO" id="GO:0048812">
    <property type="term" value="P:neuron projection morphogenesis"/>
    <property type="evidence" value="ECO:0000250"/>
    <property type="project" value="UniProtKB"/>
</dbReference>
<dbReference type="GO" id="GO:0060155">
    <property type="term" value="P:platelet dense granule organization"/>
    <property type="evidence" value="ECO:0000318"/>
    <property type="project" value="GO_Central"/>
</dbReference>
<dbReference type="GO" id="GO:0001956">
    <property type="term" value="P:positive regulation of neurotransmitter secretion"/>
    <property type="evidence" value="ECO:0000250"/>
    <property type="project" value="UniProtKB"/>
</dbReference>
<dbReference type="GO" id="GO:0060159">
    <property type="term" value="P:regulation of dopamine receptor signaling pathway"/>
    <property type="evidence" value="ECO:0000250"/>
    <property type="project" value="UniProtKB"/>
</dbReference>
<dbReference type="GO" id="GO:0009966">
    <property type="term" value="P:regulation of signal transduction"/>
    <property type="evidence" value="ECO:0000318"/>
    <property type="project" value="GO_Central"/>
</dbReference>
<dbReference type="GO" id="GO:2000300">
    <property type="term" value="P:regulation of synaptic vesicle exocytosis"/>
    <property type="evidence" value="ECO:0000318"/>
    <property type="project" value="GO_Central"/>
</dbReference>
<dbReference type="InterPro" id="IPR007531">
    <property type="entry name" value="Dysbindin"/>
</dbReference>
<dbReference type="PANTHER" id="PTHR16294:SF5">
    <property type="entry name" value="DYSBINDIN"/>
    <property type="match status" value="1"/>
</dbReference>
<dbReference type="PANTHER" id="PTHR16294">
    <property type="entry name" value="DYSTROBREVIN BINDING PROTEIN 1 DYSBINDIN"/>
    <property type="match status" value="1"/>
</dbReference>
<dbReference type="Pfam" id="PF04440">
    <property type="entry name" value="Dysbindin"/>
    <property type="match status" value="1"/>
</dbReference>
<protein>
    <recommendedName>
        <fullName>Dysbindin</fullName>
    </recommendedName>
    <alternativeName>
        <fullName>Biogenesis of lysosome-related organelles complex 1 subunit 8</fullName>
        <shortName>BLOC-1 subunit 8</shortName>
    </alternativeName>
    <alternativeName>
        <fullName>Dysbindin-1</fullName>
    </alternativeName>
    <alternativeName>
        <fullName>Dystrobrevin-binding protein 1</fullName>
    </alternativeName>
</protein>
<sequence>MLETLRERLLSVQQDFTSGLKTLGDKSREAKKSRQRTAQCSPEFSAGLELLSRYEDAWAALHKGAKDCAKAGELVDSEVVMLSAHWEKKRNSLVELQDQLQQIPGFLADLECLTASLARLEANFEEMETHLLCLEDLCEQCELERYKCVQTLQLENYKKTKRKELENFKAELDAEHAQKVLDMEHTQQMKLKERQKFFEEAFQQDMEQYLSTGYLQIAERREPIGSMSSMEVNVDMLEQMDLMDMSDQEALDVFLNSGGEDNNMLSPMLGPDSSTYVNEISLQVPSQSELRHKLSSLSSTCTDSASQEASEGESPVVQSDEEEVQVDTALAAVAERKGASDVSDESDSQTI</sequence>
<feature type="chain" id="PRO_0000267211" description="Dysbindin">
    <location>
        <begin position="1"/>
        <end position="351"/>
    </location>
</feature>
<feature type="region of interest" description="Disordered" evidence="3">
    <location>
        <begin position="291"/>
        <end position="325"/>
    </location>
</feature>
<feature type="coiled-coil region" evidence="2">
    <location>
        <begin position="106"/>
        <end position="179"/>
    </location>
</feature>
<feature type="compositionally biased region" description="Low complexity" evidence="3">
    <location>
        <begin position="295"/>
        <end position="306"/>
    </location>
</feature>
<keyword id="KW-0175">Coiled coil</keyword>
<keyword id="KW-0963">Cytoplasm</keyword>
<keyword id="KW-0968">Cytoplasmic vesicle</keyword>
<keyword id="KW-0256">Endoplasmic reticulum</keyword>
<keyword id="KW-0967">Endosome</keyword>
<keyword id="KW-0472">Membrane</keyword>
<keyword id="KW-0539">Nucleus</keyword>
<keyword id="KW-1185">Reference proteome</keyword>
<keyword id="KW-0770">Synapse</keyword>
<gene>
    <name type="primary">DTNBP1</name>
    <name type="synonym">Bloc1s8</name>
    <name type="ORF">RCJMB04_10b8</name>
</gene>
<reference key="1">
    <citation type="journal article" date="2005" name="Genome Biol.">
        <title>Full-length cDNAs from chicken bursal lymphocytes to facilitate gene function analysis.</title>
        <authorList>
            <person name="Caldwell R.B."/>
            <person name="Kierzek A.M."/>
            <person name="Arakawa H."/>
            <person name="Bezzubov Y."/>
            <person name="Zaim J."/>
            <person name="Fiedler P."/>
            <person name="Kutter S."/>
            <person name="Blagodatski A."/>
            <person name="Kostovska D."/>
            <person name="Koter M."/>
            <person name="Plachy J."/>
            <person name="Carninci P."/>
            <person name="Hayashizaki Y."/>
            <person name="Buerstedde J.-M."/>
        </authorList>
    </citation>
    <scope>NUCLEOTIDE SEQUENCE [LARGE SCALE MRNA]</scope>
    <source>
        <strain>CB</strain>
        <tissue>Bursa of Fabricius</tissue>
    </source>
</reference>
<proteinExistence type="evidence at transcript level"/>
<evidence type="ECO:0000250" key="1"/>
<evidence type="ECO:0000255" key="2"/>
<evidence type="ECO:0000256" key="3">
    <source>
        <dbReference type="SAM" id="MobiDB-lite"/>
    </source>
</evidence>
<evidence type="ECO:0000305" key="4"/>